<gene>
    <name evidence="1" type="primary">rpmI</name>
    <name type="ordered locus">Ecaj_0135</name>
</gene>
<evidence type="ECO:0000255" key="1">
    <source>
        <dbReference type="HAMAP-Rule" id="MF_00514"/>
    </source>
</evidence>
<evidence type="ECO:0000256" key="2">
    <source>
        <dbReference type="SAM" id="MobiDB-lite"/>
    </source>
</evidence>
<evidence type="ECO:0000305" key="3"/>
<proteinExistence type="inferred from homology"/>
<name>RL35_EHRCJ</name>
<reference key="1">
    <citation type="journal article" date="2006" name="J. Bacteriol.">
        <title>The genome of the obligately intracellular bacterium Ehrlichia canis reveals themes of complex membrane structure and immune evasion strategies.</title>
        <authorList>
            <person name="Mavromatis K."/>
            <person name="Doyle C.K."/>
            <person name="Lykidis A."/>
            <person name="Ivanova N."/>
            <person name="Francino M.P."/>
            <person name="Chain P."/>
            <person name="Shin M."/>
            <person name="Malfatti S."/>
            <person name="Larimer F."/>
            <person name="Copeland A."/>
            <person name="Detter J.C."/>
            <person name="Land M."/>
            <person name="Richardson P.M."/>
            <person name="Yu X.J."/>
            <person name="Walker D.H."/>
            <person name="McBride J.W."/>
            <person name="Kyrpides N.C."/>
        </authorList>
    </citation>
    <scope>NUCLEOTIDE SEQUENCE [LARGE SCALE GENOMIC DNA]</scope>
    <source>
        <strain>Jake</strain>
    </source>
</reference>
<sequence>MPKLKTKSSVKKRFSVTATGKIKSTQSAKRHGMTKRSKRSIRVQRGTAIMNPSDSRIVKLFMPYSR</sequence>
<comment type="similarity">
    <text evidence="1">Belongs to the bacterial ribosomal protein bL35 family.</text>
</comment>
<keyword id="KW-0687">Ribonucleoprotein</keyword>
<keyword id="KW-0689">Ribosomal protein</keyword>
<dbReference type="EMBL" id="CP000107">
    <property type="protein sequence ID" value="AAZ68186.1"/>
    <property type="molecule type" value="Genomic_DNA"/>
</dbReference>
<dbReference type="RefSeq" id="WP_011304264.1">
    <property type="nucleotide sequence ID" value="NC_007354.1"/>
</dbReference>
<dbReference type="SMR" id="Q3YSW9"/>
<dbReference type="STRING" id="269484.Ecaj_0135"/>
<dbReference type="KEGG" id="ecn:Ecaj_0135"/>
<dbReference type="eggNOG" id="COG0291">
    <property type="taxonomic scope" value="Bacteria"/>
</dbReference>
<dbReference type="HOGENOM" id="CLU_169643_2_1_5"/>
<dbReference type="InParanoid" id="Q3YSW9"/>
<dbReference type="Proteomes" id="UP000000435">
    <property type="component" value="Chromosome"/>
</dbReference>
<dbReference type="GO" id="GO:0022625">
    <property type="term" value="C:cytosolic large ribosomal subunit"/>
    <property type="evidence" value="ECO:0007669"/>
    <property type="project" value="TreeGrafter"/>
</dbReference>
<dbReference type="GO" id="GO:0003735">
    <property type="term" value="F:structural constituent of ribosome"/>
    <property type="evidence" value="ECO:0007669"/>
    <property type="project" value="InterPro"/>
</dbReference>
<dbReference type="GO" id="GO:0006412">
    <property type="term" value="P:translation"/>
    <property type="evidence" value="ECO:0007669"/>
    <property type="project" value="UniProtKB-UniRule"/>
</dbReference>
<dbReference type="FunFam" id="4.10.410.60:FF:000001">
    <property type="entry name" value="50S ribosomal protein L35"/>
    <property type="match status" value="1"/>
</dbReference>
<dbReference type="Gene3D" id="4.10.410.60">
    <property type="match status" value="1"/>
</dbReference>
<dbReference type="HAMAP" id="MF_00514">
    <property type="entry name" value="Ribosomal_bL35"/>
    <property type="match status" value="1"/>
</dbReference>
<dbReference type="InterPro" id="IPR001706">
    <property type="entry name" value="Ribosomal_bL35"/>
</dbReference>
<dbReference type="InterPro" id="IPR021137">
    <property type="entry name" value="Ribosomal_bL35-like"/>
</dbReference>
<dbReference type="InterPro" id="IPR018265">
    <property type="entry name" value="Ribosomal_bL35_CS"/>
</dbReference>
<dbReference type="InterPro" id="IPR037229">
    <property type="entry name" value="Ribosomal_bL35_sf"/>
</dbReference>
<dbReference type="NCBIfam" id="TIGR00001">
    <property type="entry name" value="rpmI_bact"/>
    <property type="match status" value="1"/>
</dbReference>
<dbReference type="PANTHER" id="PTHR33343">
    <property type="entry name" value="54S RIBOSOMAL PROTEIN BL35M"/>
    <property type="match status" value="1"/>
</dbReference>
<dbReference type="PANTHER" id="PTHR33343:SF1">
    <property type="entry name" value="LARGE RIBOSOMAL SUBUNIT PROTEIN BL35M"/>
    <property type="match status" value="1"/>
</dbReference>
<dbReference type="Pfam" id="PF01632">
    <property type="entry name" value="Ribosomal_L35p"/>
    <property type="match status" value="1"/>
</dbReference>
<dbReference type="PRINTS" id="PR00064">
    <property type="entry name" value="RIBOSOMALL35"/>
</dbReference>
<dbReference type="SUPFAM" id="SSF143034">
    <property type="entry name" value="L35p-like"/>
    <property type="match status" value="1"/>
</dbReference>
<dbReference type="PROSITE" id="PS00936">
    <property type="entry name" value="RIBOSOMAL_L35"/>
    <property type="match status" value="1"/>
</dbReference>
<protein>
    <recommendedName>
        <fullName evidence="1">Large ribosomal subunit protein bL35</fullName>
    </recommendedName>
    <alternativeName>
        <fullName evidence="3">50S ribosomal protein L35</fullName>
    </alternativeName>
</protein>
<feature type="chain" id="PRO_0000258673" description="Large ribosomal subunit protein bL35">
    <location>
        <begin position="1"/>
        <end position="66"/>
    </location>
</feature>
<feature type="region of interest" description="Disordered" evidence="2">
    <location>
        <begin position="21"/>
        <end position="40"/>
    </location>
</feature>
<feature type="compositionally biased region" description="Basic residues" evidence="2">
    <location>
        <begin position="28"/>
        <end position="40"/>
    </location>
</feature>
<organism>
    <name type="scientific">Ehrlichia canis (strain Jake)</name>
    <dbReference type="NCBI Taxonomy" id="269484"/>
    <lineage>
        <taxon>Bacteria</taxon>
        <taxon>Pseudomonadati</taxon>
        <taxon>Pseudomonadota</taxon>
        <taxon>Alphaproteobacteria</taxon>
        <taxon>Rickettsiales</taxon>
        <taxon>Anaplasmataceae</taxon>
        <taxon>Ehrlichia</taxon>
    </lineage>
</organism>
<accession>Q3YSW9</accession>